<dbReference type="EC" id="2.1.1.61" evidence="1"/>
<dbReference type="EC" id="1.5.-.-" evidence="1"/>
<dbReference type="EMBL" id="AM260479">
    <property type="protein sequence ID" value="CAJ92615.1"/>
    <property type="molecule type" value="Genomic_DNA"/>
</dbReference>
<dbReference type="RefSeq" id="WP_011615106.1">
    <property type="nucleotide sequence ID" value="NC_008313.1"/>
</dbReference>
<dbReference type="SMR" id="Q0KBK6"/>
<dbReference type="STRING" id="381666.H16_A1481"/>
<dbReference type="KEGG" id="reh:H16_A1481"/>
<dbReference type="PATRIC" id="fig|381666.6.peg.1869"/>
<dbReference type="eggNOG" id="COG0665">
    <property type="taxonomic scope" value="Bacteria"/>
</dbReference>
<dbReference type="eggNOG" id="COG4121">
    <property type="taxonomic scope" value="Bacteria"/>
</dbReference>
<dbReference type="HOGENOM" id="CLU_022427_1_0_4"/>
<dbReference type="OrthoDB" id="9786494at2"/>
<dbReference type="Proteomes" id="UP000008210">
    <property type="component" value="Chromosome 1"/>
</dbReference>
<dbReference type="GO" id="GO:0005737">
    <property type="term" value="C:cytoplasm"/>
    <property type="evidence" value="ECO:0007669"/>
    <property type="project" value="UniProtKB-SubCell"/>
</dbReference>
<dbReference type="GO" id="GO:0050660">
    <property type="term" value="F:flavin adenine dinucleotide binding"/>
    <property type="evidence" value="ECO:0007669"/>
    <property type="project" value="UniProtKB-UniRule"/>
</dbReference>
<dbReference type="GO" id="GO:0016645">
    <property type="term" value="F:oxidoreductase activity, acting on the CH-NH group of donors"/>
    <property type="evidence" value="ECO:0007669"/>
    <property type="project" value="InterPro"/>
</dbReference>
<dbReference type="GO" id="GO:0004808">
    <property type="term" value="F:tRNA (5-methylaminomethyl-2-thiouridylate)(34)-methyltransferase activity"/>
    <property type="evidence" value="ECO:0007669"/>
    <property type="project" value="UniProtKB-EC"/>
</dbReference>
<dbReference type="GO" id="GO:0032259">
    <property type="term" value="P:methylation"/>
    <property type="evidence" value="ECO:0007669"/>
    <property type="project" value="UniProtKB-KW"/>
</dbReference>
<dbReference type="GO" id="GO:0002097">
    <property type="term" value="P:tRNA wobble base modification"/>
    <property type="evidence" value="ECO:0007669"/>
    <property type="project" value="UniProtKB-UniRule"/>
</dbReference>
<dbReference type="Gene3D" id="3.30.9.10">
    <property type="entry name" value="D-Amino Acid Oxidase, subunit A, domain 2"/>
    <property type="match status" value="1"/>
</dbReference>
<dbReference type="Gene3D" id="3.50.50.60">
    <property type="entry name" value="FAD/NAD(P)-binding domain"/>
    <property type="match status" value="1"/>
</dbReference>
<dbReference type="Gene3D" id="3.40.50.150">
    <property type="entry name" value="Vaccinia Virus protein VP39"/>
    <property type="match status" value="1"/>
</dbReference>
<dbReference type="HAMAP" id="MF_01102">
    <property type="entry name" value="MnmC"/>
    <property type="match status" value="1"/>
</dbReference>
<dbReference type="InterPro" id="IPR006076">
    <property type="entry name" value="FAD-dep_OxRdtase"/>
</dbReference>
<dbReference type="InterPro" id="IPR036188">
    <property type="entry name" value="FAD/NAD-bd_sf"/>
</dbReference>
<dbReference type="InterPro" id="IPR008471">
    <property type="entry name" value="MnmC-like_methylTransf"/>
</dbReference>
<dbReference type="InterPro" id="IPR029063">
    <property type="entry name" value="SAM-dependent_MTases_sf"/>
</dbReference>
<dbReference type="InterPro" id="IPR023032">
    <property type="entry name" value="tRNA_MAMT_biosynth_bifunc_MnmC"/>
</dbReference>
<dbReference type="InterPro" id="IPR047785">
    <property type="entry name" value="tRNA_MNMC2"/>
</dbReference>
<dbReference type="InterPro" id="IPR017610">
    <property type="entry name" value="tRNA_S-uridine_synth_MnmC_C"/>
</dbReference>
<dbReference type="NCBIfam" id="TIGR03197">
    <property type="entry name" value="MnmC_Cterm"/>
    <property type="match status" value="1"/>
</dbReference>
<dbReference type="NCBIfam" id="NF002481">
    <property type="entry name" value="PRK01747.1-2"/>
    <property type="match status" value="1"/>
</dbReference>
<dbReference type="NCBIfam" id="NF002483">
    <property type="entry name" value="PRK01747.1-4"/>
    <property type="match status" value="1"/>
</dbReference>
<dbReference type="NCBIfam" id="NF033855">
    <property type="entry name" value="tRNA_MNMC2"/>
    <property type="match status" value="1"/>
</dbReference>
<dbReference type="PANTHER" id="PTHR13847">
    <property type="entry name" value="SARCOSINE DEHYDROGENASE-RELATED"/>
    <property type="match status" value="1"/>
</dbReference>
<dbReference type="PANTHER" id="PTHR13847:SF283">
    <property type="entry name" value="TRNA 5-METHYLAMINOMETHYL-2-THIOURIDINE BIOSYNTHESIS BIFUNCTIONAL PROTEIN MNMC"/>
    <property type="match status" value="1"/>
</dbReference>
<dbReference type="Pfam" id="PF01266">
    <property type="entry name" value="DAO"/>
    <property type="match status" value="1"/>
</dbReference>
<dbReference type="Pfam" id="PF05430">
    <property type="entry name" value="Methyltransf_30"/>
    <property type="match status" value="1"/>
</dbReference>
<dbReference type="SUPFAM" id="SSF51905">
    <property type="entry name" value="FAD/NAD(P)-binding domain"/>
    <property type="match status" value="1"/>
</dbReference>
<name>MNMC_CUPNH</name>
<feature type="chain" id="PRO_1000065009" description="tRNA 5-methylaminomethyl-2-thiouridine biosynthesis bifunctional protein MnmC">
    <location>
        <begin position="1"/>
        <end position="657"/>
    </location>
</feature>
<feature type="region of interest" description="tRNA (mnm(5)s(2)U34)-methyltransferase">
    <location>
        <begin position="1"/>
        <end position="233"/>
    </location>
</feature>
<feature type="region of interest" description="FAD-dependent cmnm(5)s(2)U34 oxidoreductase">
    <location>
        <begin position="257"/>
        <end position="657"/>
    </location>
</feature>
<protein>
    <recommendedName>
        <fullName evidence="1">tRNA 5-methylaminomethyl-2-thiouridine biosynthesis bifunctional protein MnmC</fullName>
        <shortName evidence="1">tRNA mnm(5)s(2)U biosynthesis bifunctional protein</shortName>
    </recommendedName>
    <domain>
        <recommendedName>
            <fullName evidence="1">tRNA (mnm(5)s(2)U34)-methyltransferase</fullName>
            <ecNumber evidence="1">2.1.1.61</ecNumber>
        </recommendedName>
    </domain>
    <domain>
        <recommendedName>
            <fullName evidence="1">FAD-dependent cmnm(5)s(2)U34 oxidoreductase</fullName>
            <ecNumber evidence="1">1.5.-.-</ecNumber>
        </recommendedName>
    </domain>
</protein>
<comment type="function">
    <text evidence="1">Catalyzes the last two steps in the biosynthesis of 5-methylaminomethyl-2-thiouridine (mnm(5)s(2)U) at the wobble position (U34) in tRNA. Catalyzes the FAD-dependent demodification of cmnm(5)s(2)U34 to nm(5)s(2)U34, followed by the transfer of a methyl group from S-adenosyl-L-methionine to nm(5)s(2)U34, to form mnm(5)s(2)U34.</text>
</comment>
<comment type="catalytic activity">
    <reaction evidence="1">
        <text>5-aminomethyl-2-thiouridine(34) in tRNA + S-adenosyl-L-methionine = 5-methylaminomethyl-2-thiouridine(34) in tRNA + S-adenosyl-L-homocysteine + H(+)</text>
        <dbReference type="Rhea" id="RHEA:19569"/>
        <dbReference type="Rhea" id="RHEA-COMP:10195"/>
        <dbReference type="Rhea" id="RHEA-COMP:10197"/>
        <dbReference type="ChEBI" id="CHEBI:15378"/>
        <dbReference type="ChEBI" id="CHEBI:57856"/>
        <dbReference type="ChEBI" id="CHEBI:59789"/>
        <dbReference type="ChEBI" id="CHEBI:74454"/>
        <dbReference type="ChEBI" id="CHEBI:74455"/>
        <dbReference type="EC" id="2.1.1.61"/>
    </reaction>
</comment>
<comment type="cofactor">
    <cofactor evidence="1">
        <name>FAD</name>
        <dbReference type="ChEBI" id="CHEBI:57692"/>
    </cofactor>
</comment>
<comment type="subcellular location">
    <subcellularLocation>
        <location evidence="1">Cytoplasm</location>
    </subcellularLocation>
</comment>
<comment type="similarity">
    <text evidence="1">In the N-terminal section; belongs to the methyltransferase superfamily. tRNA (mnm(5)s(2)U34)-methyltransferase family.</text>
</comment>
<comment type="similarity">
    <text evidence="1">In the C-terminal section; belongs to the DAO family.</text>
</comment>
<sequence length="657" mass="69737">MPRALEPAEPILSAEGIPYSPRYDDVYHSTEGGLAQAAHVFLGGNGLPQAWAGQRQFVIVETGFGLGLNFLATWQAWRADPQRCGTLHFVSIEKHPFTREGLAQLHAGLDGLQPLAQALQAQWPLALPGLHRLAFDGGRVVLTLALGDIEQMLPRLAAGADAFYLDGFAPARNTEMWSPQVFRGLARLARPGARLATWAAAGFVRRGLKEVGFEVSRAPGFGGKWQMTVASFRPQWKARRHAPPLPAQWAERHAIVIGAGLAGCAVTERLAARGWRVTLFDGHDGPARQTSAHRAAAMHAHLSADDSLLSRLSRTGNQYALRAWAELAEAGHAVGWHGCGVLQIGEDEAEGEAQRAALAAMRLPEGFVRWMSAEEAAAAHHAGVPRGGLWFPQGGWVAPPDICSAQLAQAGAAVTARFGCRVAAIARVDGQWQALGQDGEVLASAPVLVLANAHEAQQLLPQQHWTMRRVRGQLTTLASAQVDALGGWPDCVVTGAGYLLPRTADGAGRVGSSYDADEGPLVEQPAVHAANLARLSGMLPRQADAVAAIDPATLSGYVGVRTVTHNRLPLVGQVPDEAAALAQAASLRGAHLRDLPRMPGLYAALAYGSRGLTWAALGAELLASQIEGEPLPLESDLADAMDPARLLLRALRHGHTG</sequence>
<gene>
    <name evidence="1" type="primary">mnmC</name>
    <name type="ordered locus">H16_A1481</name>
</gene>
<accession>Q0KBK6</accession>
<reference key="1">
    <citation type="journal article" date="2006" name="Nat. Biotechnol.">
        <title>Genome sequence of the bioplastic-producing 'Knallgas' bacterium Ralstonia eutropha H16.</title>
        <authorList>
            <person name="Pohlmann A."/>
            <person name="Fricke W.F."/>
            <person name="Reinecke F."/>
            <person name="Kusian B."/>
            <person name="Liesegang H."/>
            <person name="Cramm R."/>
            <person name="Eitinger T."/>
            <person name="Ewering C."/>
            <person name="Poetter M."/>
            <person name="Schwartz E."/>
            <person name="Strittmatter A."/>
            <person name="Voss I."/>
            <person name="Gottschalk G."/>
            <person name="Steinbuechel A."/>
            <person name="Friedrich B."/>
            <person name="Bowien B."/>
        </authorList>
    </citation>
    <scope>NUCLEOTIDE SEQUENCE [LARGE SCALE GENOMIC DNA]</scope>
    <source>
        <strain>ATCC 17699 / DSM 428 / KCTC 22496 / NCIMB 10442 / H16 / Stanier 337</strain>
    </source>
</reference>
<keyword id="KW-0963">Cytoplasm</keyword>
<keyword id="KW-0274">FAD</keyword>
<keyword id="KW-0285">Flavoprotein</keyword>
<keyword id="KW-0489">Methyltransferase</keyword>
<keyword id="KW-0511">Multifunctional enzyme</keyword>
<keyword id="KW-0560">Oxidoreductase</keyword>
<keyword id="KW-1185">Reference proteome</keyword>
<keyword id="KW-0949">S-adenosyl-L-methionine</keyword>
<keyword id="KW-0808">Transferase</keyword>
<keyword id="KW-0819">tRNA processing</keyword>
<organism>
    <name type="scientific">Cupriavidus necator (strain ATCC 17699 / DSM 428 / KCTC 22496 / NCIMB 10442 / H16 / Stanier 337)</name>
    <name type="common">Ralstonia eutropha</name>
    <dbReference type="NCBI Taxonomy" id="381666"/>
    <lineage>
        <taxon>Bacteria</taxon>
        <taxon>Pseudomonadati</taxon>
        <taxon>Pseudomonadota</taxon>
        <taxon>Betaproteobacteria</taxon>
        <taxon>Burkholderiales</taxon>
        <taxon>Burkholderiaceae</taxon>
        <taxon>Cupriavidus</taxon>
    </lineage>
</organism>
<proteinExistence type="inferred from homology"/>
<evidence type="ECO:0000255" key="1">
    <source>
        <dbReference type="HAMAP-Rule" id="MF_01102"/>
    </source>
</evidence>